<proteinExistence type="inferred from homology"/>
<name>PDXH_MYCTO</name>
<protein>
    <recommendedName>
        <fullName evidence="2">Pyridoxine/pyridoxamine 5'-phosphate oxidase</fullName>
        <ecNumber evidence="2">1.4.3.5</ecNumber>
    </recommendedName>
    <alternativeName>
        <fullName evidence="2">PNP/PMP oxidase</fullName>
        <shortName evidence="2">PNPOx</shortName>
    </alternativeName>
    <alternativeName>
        <fullName evidence="2">Pyridoxal 5'-phosphate synthase</fullName>
    </alternativeName>
</protein>
<reference key="1">
    <citation type="journal article" date="2002" name="J. Bacteriol.">
        <title>Whole-genome comparison of Mycobacterium tuberculosis clinical and laboratory strains.</title>
        <authorList>
            <person name="Fleischmann R.D."/>
            <person name="Alland D."/>
            <person name="Eisen J.A."/>
            <person name="Carpenter L."/>
            <person name="White O."/>
            <person name="Peterson J.D."/>
            <person name="DeBoy R.T."/>
            <person name="Dodson R.J."/>
            <person name="Gwinn M.L."/>
            <person name="Haft D.H."/>
            <person name="Hickey E.K."/>
            <person name="Kolonay J.F."/>
            <person name="Nelson W.C."/>
            <person name="Umayam L.A."/>
            <person name="Ermolaeva M.D."/>
            <person name="Salzberg S.L."/>
            <person name="Delcher A."/>
            <person name="Utterback T.R."/>
            <person name="Weidman J.F."/>
            <person name="Khouri H.M."/>
            <person name="Gill J."/>
            <person name="Mikula A."/>
            <person name="Bishai W."/>
            <person name="Jacobs W.R. Jr."/>
            <person name="Venter J.C."/>
            <person name="Fraser C.M."/>
        </authorList>
    </citation>
    <scope>NUCLEOTIDE SEQUENCE [LARGE SCALE GENOMIC DNA]</scope>
    <source>
        <strain>CDC 1551 / Oshkosh</strain>
    </source>
</reference>
<gene>
    <name evidence="2" type="primary">pdxH</name>
    <name type="ordered locus">MT2682</name>
</gene>
<comment type="function">
    <text evidence="1 2">Catalyzes the oxidation of either pyridoxine 5'-phosphate (PNP) or pyridoxamine 5'-phosphate (PMP) into pyridoxal 5'-phosphate (PLP).</text>
</comment>
<comment type="catalytic activity">
    <reaction evidence="2">
        <text>pyridoxamine 5'-phosphate + O2 + H2O = pyridoxal 5'-phosphate + H2O2 + NH4(+)</text>
        <dbReference type="Rhea" id="RHEA:15817"/>
        <dbReference type="ChEBI" id="CHEBI:15377"/>
        <dbReference type="ChEBI" id="CHEBI:15379"/>
        <dbReference type="ChEBI" id="CHEBI:16240"/>
        <dbReference type="ChEBI" id="CHEBI:28938"/>
        <dbReference type="ChEBI" id="CHEBI:58451"/>
        <dbReference type="ChEBI" id="CHEBI:597326"/>
        <dbReference type="EC" id="1.4.3.5"/>
    </reaction>
</comment>
<comment type="catalytic activity">
    <reaction evidence="2">
        <text>pyridoxine 5'-phosphate + O2 = pyridoxal 5'-phosphate + H2O2</text>
        <dbReference type="Rhea" id="RHEA:15149"/>
        <dbReference type="ChEBI" id="CHEBI:15379"/>
        <dbReference type="ChEBI" id="CHEBI:16240"/>
        <dbReference type="ChEBI" id="CHEBI:58589"/>
        <dbReference type="ChEBI" id="CHEBI:597326"/>
        <dbReference type="EC" id="1.4.3.5"/>
    </reaction>
</comment>
<comment type="cofactor">
    <cofactor evidence="1 2">
        <name>FMN</name>
        <dbReference type="ChEBI" id="CHEBI:58210"/>
    </cofactor>
    <text evidence="1 2">Binds 1 FMN per subunit.</text>
</comment>
<comment type="pathway">
    <text evidence="2">Cofactor metabolism; pyridoxal 5'-phosphate salvage; pyridoxal 5'-phosphate from pyridoxamine 5'-phosphate: step 1/1.</text>
</comment>
<comment type="pathway">
    <text evidence="2">Cofactor metabolism; pyridoxal 5'-phosphate salvage; pyridoxal 5'-phosphate from pyridoxine 5'-phosphate: step 1/1.</text>
</comment>
<comment type="subunit">
    <text evidence="1 2">Homodimer.</text>
</comment>
<comment type="similarity">
    <text evidence="2 3">Belongs to the pyridoxamine 5'-phosphate oxidase family.</text>
</comment>
<keyword id="KW-0285">Flavoprotein</keyword>
<keyword id="KW-0288">FMN</keyword>
<keyword id="KW-0560">Oxidoreductase</keyword>
<keyword id="KW-0664">Pyridoxine biosynthesis</keyword>
<keyword id="KW-1185">Reference proteome</keyword>
<organism>
    <name type="scientific">Mycobacterium tuberculosis (strain CDC 1551 / Oshkosh)</name>
    <dbReference type="NCBI Taxonomy" id="83331"/>
    <lineage>
        <taxon>Bacteria</taxon>
        <taxon>Bacillati</taxon>
        <taxon>Actinomycetota</taxon>
        <taxon>Actinomycetes</taxon>
        <taxon>Mycobacteriales</taxon>
        <taxon>Mycobacteriaceae</taxon>
        <taxon>Mycobacterium</taxon>
        <taxon>Mycobacterium tuberculosis complex</taxon>
    </lineage>
</organism>
<feature type="chain" id="PRO_0000427998" description="Pyridoxine/pyridoxamine 5'-phosphate oxidase">
    <location>
        <begin position="1"/>
        <end position="224"/>
    </location>
</feature>
<feature type="binding site" evidence="1 2">
    <location>
        <begin position="19"/>
        <end position="22"/>
    </location>
    <ligand>
        <name>substrate</name>
    </ligand>
</feature>
<feature type="binding site" evidence="2">
    <location>
        <begin position="76"/>
        <end position="81"/>
    </location>
    <ligand>
        <name>FMN</name>
        <dbReference type="ChEBI" id="CHEBI:58210"/>
    </ligand>
</feature>
<feature type="binding site" evidence="1 2">
    <location>
        <position position="81"/>
    </location>
    <ligand>
        <name>substrate</name>
    </ligand>
</feature>
<feature type="binding site" evidence="1 2">
    <location>
        <begin position="91"/>
        <end position="92"/>
    </location>
    <ligand>
        <name>FMN</name>
        <dbReference type="ChEBI" id="CHEBI:58210"/>
    </ligand>
</feature>
<feature type="binding site" evidence="1 2">
    <location>
        <position position="98"/>
    </location>
    <ligand>
        <name>FMN</name>
        <dbReference type="ChEBI" id="CHEBI:58210"/>
    </ligand>
</feature>
<feature type="binding site" evidence="2">
    <location>
        <position position="120"/>
    </location>
    <ligand>
        <name>FMN</name>
        <dbReference type="ChEBI" id="CHEBI:58210"/>
    </ligand>
</feature>
<feature type="binding site" evidence="1 2">
    <location>
        <position position="138"/>
    </location>
    <ligand>
        <name>substrate</name>
    </ligand>
</feature>
<feature type="binding site" evidence="1 2">
    <location>
        <position position="142"/>
    </location>
    <ligand>
        <name>substrate</name>
    </ligand>
</feature>
<feature type="binding site" evidence="1 2">
    <location>
        <begin position="155"/>
        <end position="156"/>
    </location>
    <ligand>
        <name>FMN</name>
        <dbReference type="ChEBI" id="CHEBI:58210"/>
    </ligand>
</feature>
<feature type="binding site" evidence="2">
    <location>
        <position position="201"/>
    </location>
    <ligand>
        <name>FMN</name>
        <dbReference type="ChEBI" id="CHEBI:58210"/>
    </ligand>
</feature>
<feature type="binding site" evidence="1 2">
    <location>
        <begin position="207"/>
        <end position="209"/>
    </location>
    <ligand>
        <name>substrate</name>
    </ligand>
</feature>
<feature type="binding site" evidence="2">
    <location>
        <position position="211"/>
    </location>
    <ligand>
        <name>FMN</name>
        <dbReference type="ChEBI" id="CHEBI:58210"/>
    </ligand>
</feature>
<accession>P9WIJ0</accession>
<accession>L0TBR8</accession>
<accession>O06207</accession>
<accession>P65682</accession>
<evidence type="ECO:0000250" key="1"/>
<evidence type="ECO:0000255" key="2">
    <source>
        <dbReference type="HAMAP-Rule" id="MF_01629"/>
    </source>
</evidence>
<evidence type="ECO:0000305" key="3"/>
<sequence length="224" mass="25186">MDDDAQMVAIDKDQLARMRGEYGPEKDGCGDLDFDWLDDGWLTLLRRWLNDAQRAGVSEPNAMVLATVADGKPVTRSVLCKILDESGVAFFTSYTSAKGEQLAVTPYASATFPWYQLGRQAHVQGPVSKVSTEEIFTYWSMRPRGAQLGAWASQQSRPVGSRAQLDNQLAEVTRRFADQDQIPVPPGWGGYRIAPEIVEFWQGRENRMHNRIRVANGRLERLQP</sequence>
<dbReference type="EC" id="1.4.3.5" evidence="2"/>
<dbReference type="EMBL" id="AE000516">
    <property type="protein sequence ID" value="AAK46998.1"/>
    <property type="molecule type" value="Genomic_DNA"/>
</dbReference>
<dbReference type="PIR" id="F70570">
    <property type="entry name" value="F70570"/>
</dbReference>
<dbReference type="RefSeq" id="WP_003413471.1">
    <property type="nucleotide sequence ID" value="NZ_KK341227.1"/>
</dbReference>
<dbReference type="SMR" id="P9WIJ0"/>
<dbReference type="GeneID" id="45426610"/>
<dbReference type="KEGG" id="mtc:MT2682"/>
<dbReference type="PATRIC" id="fig|83331.31.peg.2892"/>
<dbReference type="HOGENOM" id="CLU_032263_2_2_11"/>
<dbReference type="UniPathway" id="UPA01068">
    <property type="reaction ID" value="UER00304"/>
</dbReference>
<dbReference type="UniPathway" id="UPA01068">
    <property type="reaction ID" value="UER00305"/>
</dbReference>
<dbReference type="Proteomes" id="UP000001020">
    <property type="component" value="Chromosome"/>
</dbReference>
<dbReference type="GO" id="GO:0010181">
    <property type="term" value="F:FMN binding"/>
    <property type="evidence" value="ECO:0007669"/>
    <property type="project" value="UniProtKB-UniRule"/>
</dbReference>
<dbReference type="GO" id="GO:0004733">
    <property type="term" value="F:pyridoxamine phosphate oxidase activity"/>
    <property type="evidence" value="ECO:0007669"/>
    <property type="project" value="UniProtKB-UniRule"/>
</dbReference>
<dbReference type="GO" id="GO:0008615">
    <property type="term" value="P:pyridoxine biosynthetic process"/>
    <property type="evidence" value="ECO:0007669"/>
    <property type="project" value="UniProtKB-KW"/>
</dbReference>
<dbReference type="FunFam" id="2.30.110.10:FF:000021">
    <property type="entry name" value="Pyridoxine 5'-phosphate oxidase"/>
    <property type="match status" value="1"/>
</dbReference>
<dbReference type="Gene3D" id="2.30.110.10">
    <property type="entry name" value="Electron Transport, Fmn-binding Protein, Chain A"/>
    <property type="match status" value="1"/>
</dbReference>
<dbReference type="HAMAP" id="MF_01629">
    <property type="entry name" value="PdxH"/>
    <property type="match status" value="1"/>
</dbReference>
<dbReference type="InterPro" id="IPR000659">
    <property type="entry name" value="Pyridox_Oxase"/>
</dbReference>
<dbReference type="InterPro" id="IPR019740">
    <property type="entry name" value="Pyridox_Oxase_CS"/>
</dbReference>
<dbReference type="InterPro" id="IPR011576">
    <property type="entry name" value="Pyridox_Oxase_N"/>
</dbReference>
<dbReference type="InterPro" id="IPR019576">
    <property type="entry name" value="Pyridoxamine_oxidase_dimer_C"/>
</dbReference>
<dbReference type="InterPro" id="IPR012349">
    <property type="entry name" value="Split_barrel_FMN-bd"/>
</dbReference>
<dbReference type="NCBIfam" id="TIGR00558">
    <property type="entry name" value="pdxH"/>
    <property type="match status" value="1"/>
</dbReference>
<dbReference type="NCBIfam" id="NF004231">
    <property type="entry name" value="PRK05679.1"/>
    <property type="match status" value="1"/>
</dbReference>
<dbReference type="PANTHER" id="PTHR10851:SF0">
    <property type="entry name" value="PYRIDOXINE-5'-PHOSPHATE OXIDASE"/>
    <property type="match status" value="1"/>
</dbReference>
<dbReference type="PANTHER" id="PTHR10851">
    <property type="entry name" value="PYRIDOXINE-5-PHOSPHATE OXIDASE"/>
    <property type="match status" value="1"/>
</dbReference>
<dbReference type="Pfam" id="PF10590">
    <property type="entry name" value="PNP_phzG_C"/>
    <property type="match status" value="1"/>
</dbReference>
<dbReference type="Pfam" id="PF01243">
    <property type="entry name" value="PNPOx_N"/>
    <property type="match status" value="1"/>
</dbReference>
<dbReference type="PIRSF" id="PIRSF000190">
    <property type="entry name" value="Pyd_amn-ph_oxd"/>
    <property type="match status" value="1"/>
</dbReference>
<dbReference type="SUPFAM" id="SSF50475">
    <property type="entry name" value="FMN-binding split barrel"/>
    <property type="match status" value="1"/>
</dbReference>
<dbReference type="PROSITE" id="PS01064">
    <property type="entry name" value="PYRIDOX_OXIDASE"/>
    <property type="match status" value="1"/>
</dbReference>